<dbReference type="EMBL" id="AE007317">
    <property type="protein sequence ID" value="AAL00526.1"/>
    <property type="molecule type" value="Genomic_DNA"/>
</dbReference>
<dbReference type="PIR" id="A99087">
    <property type="entry name" value="A99087"/>
</dbReference>
<dbReference type="RefSeq" id="NP_359315.1">
    <property type="nucleotide sequence ID" value="NC_003098.1"/>
</dbReference>
<dbReference type="RefSeq" id="WP_000917304.1">
    <property type="nucleotide sequence ID" value="NC_003098.1"/>
</dbReference>
<dbReference type="SMR" id="Q8CWN9"/>
<dbReference type="STRING" id="171101.spr1723"/>
<dbReference type="KEGG" id="spr:spr1723"/>
<dbReference type="PATRIC" id="fig|171101.6.peg.1863"/>
<dbReference type="eggNOG" id="COG0234">
    <property type="taxonomic scope" value="Bacteria"/>
</dbReference>
<dbReference type="HOGENOM" id="CLU_132825_1_2_9"/>
<dbReference type="Proteomes" id="UP000000586">
    <property type="component" value="Chromosome"/>
</dbReference>
<dbReference type="GO" id="GO:0005737">
    <property type="term" value="C:cytoplasm"/>
    <property type="evidence" value="ECO:0007669"/>
    <property type="project" value="UniProtKB-SubCell"/>
</dbReference>
<dbReference type="GO" id="GO:0005524">
    <property type="term" value="F:ATP binding"/>
    <property type="evidence" value="ECO:0007669"/>
    <property type="project" value="InterPro"/>
</dbReference>
<dbReference type="GO" id="GO:0046872">
    <property type="term" value="F:metal ion binding"/>
    <property type="evidence" value="ECO:0000318"/>
    <property type="project" value="GO_Central"/>
</dbReference>
<dbReference type="GO" id="GO:0044183">
    <property type="term" value="F:protein folding chaperone"/>
    <property type="evidence" value="ECO:0007669"/>
    <property type="project" value="InterPro"/>
</dbReference>
<dbReference type="GO" id="GO:0051087">
    <property type="term" value="F:protein-folding chaperone binding"/>
    <property type="evidence" value="ECO:0000318"/>
    <property type="project" value="GO_Central"/>
</dbReference>
<dbReference type="GO" id="GO:0051082">
    <property type="term" value="F:unfolded protein binding"/>
    <property type="evidence" value="ECO:0000318"/>
    <property type="project" value="GO_Central"/>
</dbReference>
<dbReference type="GO" id="GO:0051085">
    <property type="term" value="P:chaperone cofactor-dependent protein refolding"/>
    <property type="evidence" value="ECO:0000318"/>
    <property type="project" value="GO_Central"/>
</dbReference>
<dbReference type="CDD" id="cd00320">
    <property type="entry name" value="cpn10"/>
    <property type="match status" value="1"/>
</dbReference>
<dbReference type="FunFam" id="2.30.33.40:FF:000007">
    <property type="entry name" value="10 kDa chaperonin"/>
    <property type="match status" value="1"/>
</dbReference>
<dbReference type="Gene3D" id="2.30.33.40">
    <property type="entry name" value="GroES chaperonin"/>
    <property type="match status" value="1"/>
</dbReference>
<dbReference type="HAMAP" id="MF_00580">
    <property type="entry name" value="CH10"/>
    <property type="match status" value="1"/>
</dbReference>
<dbReference type="InterPro" id="IPR020818">
    <property type="entry name" value="Chaperonin_GroES"/>
</dbReference>
<dbReference type="InterPro" id="IPR037124">
    <property type="entry name" value="Chaperonin_GroES_sf"/>
</dbReference>
<dbReference type="InterPro" id="IPR018369">
    <property type="entry name" value="Chaprnonin_Cpn10_CS"/>
</dbReference>
<dbReference type="InterPro" id="IPR011032">
    <property type="entry name" value="GroES-like_sf"/>
</dbReference>
<dbReference type="NCBIfam" id="NF001528">
    <property type="entry name" value="PRK00364.1-4"/>
    <property type="match status" value="1"/>
</dbReference>
<dbReference type="PANTHER" id="PTHR10772">
    <property type="entry name" value="10 KDA HEAT SHOCK PROTEIN"/>
    <property type="match status" value="1"/>
</dbReference>
<dbReference type="PANTHER" id="PTHR10772:SF58">
    <property type="entry name" value="CO-CHAPERONIN GROES"/>
    <property type="match status" value="1"/>
</dbReference>
<dbReference type="Pfam" id="PF00166">
    <property type="entry name" value="Cpn10"/>
    <property type="match status" value="1"/>
</dbReference>
<dbReference type="PRINTS" id="PR00297">
    <property type="entry name" value="CHAPERONIN10"/>
</dbReference>
<dbReference type="SMART" id="SM00883">
    <property type="entry name" value="Cpn10"/>
    <property type="match status" value="1"/>
</dbReference>
<dbReference type="SUPFAM" id="SSF50129">
    <property type="entry name" value="GroES-like"/>
    <property type="match status" value="1"/>
</dbReference>
<dbReference type="PROSITE" id="PS00681">
    <property type="entry name" value="CHAPERONINS_CPN10"/>
    <property type="match status" value="1"/>
</dbReference>
<evidence type="ECO:0000255" key="1">
    <source>
        <dbReference type="HAMAP-Rule" id="MF_00580"/>
    </source>
</evidence>
<protein>
    <recommendedName>
        <fullName evidence="1">Co-chaperonin GroES</fullName>
    </recommendedName>
    <alternativeName>
        <fullName evidence="1">10 kDa chaperonin</fullName>
    </alternativeName>
    <alternativeName>
        <fullName evidence="1">Chaperonin-10</fullName>
        <shortName evidence="1">Cpn10</shortName>
    </alternativeName>
</protein>
<name>CH10_STRR6</name>
<accession>Q8CWN9</accession>
<proteinExistence type="inferred from homology"/>
<organism>
    <name type="scientific">Streptococcus pneumoniae (strain ATCC BAA-255 / R6)</name>
    <dbReference type="NCBI Taxonomy" id="171101"/>
    <lineage>
        <taxon>Bacteria</taxon>
        <taxon>Bacillati</taxon>
        <taxon>Bacillota</taxon>
        <taxon>Bacilli</taxon>
        <taxon>Lactobacillales</taxon>
        <taxon>Streptococcaceae</taxon>
        <taxon>Streptococcus</taxon>
    </lineage>
</organism>
<sequence>MLKPLGDRVLLKIEEKEQTVGGFVLAGSAQEKTKTAQVVATGQGVRTLNGDLVAPSVKTGDRVLVEAHAGLDVKDGDEKYIIVGEANILAIIEE</sequence>
<gene>
    <name evidence="1" type="primary">groES</name>
    <name evidence="1" type="synonym">groS</name>
    <name type="ordered locus">spr1723</name>
</gene>
<reference key="1">
    <citation type="journal article" date="2001" name="J. Bacteriol.">
        <title>Genome of the bacterium Streptococcus pneumoniae strain R6.</title>
        <authorList>
            <person name="Hoskins J."/>
            <person name="Alborn W.E. Jr."/>
            <person name="Arnold J."/>
            <person name="Blaszczak L.C."/>
            <person name="Burgett S."/>
            <person name="DeHoff B.S."/>
            <person name="Estrem S.T."/>
            <person name="Fritz L."/>
            <person name="Fu D.-J."/>
            <person name="Fuller W."/>
            <person name="Geringer C."/>
            <person name="Gilmour R."/>
            <person name="Glass J.S."/>
            <person name="Khoja H."/>
            <person name="Kraft A.R."/>
            <person name="Lagace R.E."/>
            <person name="LeBlanc D.J."/>
            <person name="Lee L.N."/>
            <person name="Lefkowitz E.J."/>
            <person name="Lu J."/>
            <person name="Matsushima P."/>
            <person name="McAhren S.M."/>
            <person name="McHenney M."/>
            <person name="McLeaster K."/>
            <person name="Mundy C.W."/>
            <person name="Nicas T.I."/>
            <person name="Norris F.H."/>
            <person name="O'Gara M."/>
            <person name="Peery R.B."/>
            <person name="Robertson G.T."/>
            <person name="Rockey P."/>
            <person name="Sun P.-M."/>
            <person name="Winkler M.E."/>
            <person name="Yang Y."/>
            <person name="Young-Bellido M."/>
            <person name="Zhao G."/>
            <person name="Zook C.A."/>
            <person name="Baltz R.H."/>
            <person name="Jaskunas S.R."/>
            <person name="Rosteck P.R. Jr."/>
            <person name="Skatrud P.L."/>
            <person name="Glass J.I."/>
        </authorList>
    </citation>
    <scope>NUCLEOTIDE SEQUENCE [LARGE SCALE GENOMIC DNA]</scope>
    <source>
        <strain>ATCC BAA-255 / R6</strain>
    </source>
</reference>
<keyword id="KW-0143">Chaperone</keyword>
<keyword id="KW-0963">Cytoplasm</keyword>
<keyword id="KW-1185">Reference proteome</keyword>
<feature type="chain" id="PRO_0000174867" description="Co-chaperonin GroES">
    <location>
        <begin position="1"/>
        <end position="94"/>
    </location>
</feature>
<comment type="function">
    <text evidence="1">Together with the chaperonin GroEL, plays an essential role in assisting protein folding. The GroEL-GroES system forms a nano-cage that allows encapsulation of the non-native substrate proteins and provides a physical environment optimized to promote and accelerate protein folding. GroES binds to the apical surface of the GroEL ring, thereby capping the opening of the GroEL channel.</text>
</comment>
<comment type="subunit">
    <text evidence="1">Heptamer of 7 subunits arranged in a ring. Interacts with the chaperonin GroEL.</text>
</comment>
<comment type="subcellular location">
    <subcellularLocation>
        <location evidence="1">Cytoplasm</location>
    </subcellularLocation>
</comment>
<comment type="similarity">
    <text evidence="1">Belongs to the GroES chaperonin family.</text>
</comment>